<evidence type="ECO:0000255" key="1">
    <source>
        <dbReference type="HAMAP-Rule" id="MF_01020"/>
    </source>
</evidence>
<dbReference type="EC" id="3.6.1.31" evidence="1"/>
<dbReference type="EMBL" id="AP009247">
    <property type="protein sequence ID" value="BAF61403.1"/>
    <property type="molecule type" value="Genomic_DNA"/>
</dbReference>
<dbReference type="RefSeq" id="WP_011929673.1">
    <property type="nucleotide sequence ID" value="NC_009465.1"/>
</dbReference>
<dbReference type="SMR" id="A5CXC6"/>
<dbReference type="STRING" id="412965.COSY_0274"/>
<dbReference type="KEGG" id="vok:COSY_0274"/>
<dbReference type="eggNOG" id="COG0140">
    <property type="taxonomic scope" value="Bacteria"/>
</dbReference>
<dbReference type="HOGENOM" id="CLU_123337_1_2_6"/>
<dbReference type="OrthoDB" id="9814738at2"/>
<dbReference type="UniPathway" id="UPA00031">
    <property type="reaction ID" value="UER00007"/>
</dbReference>
<dbReference type="Proteomes" id="UP000000247">
    <property type="component" value="Chromosome"/>
</dbReference>
<dbReference type="GO" id="GO:0005737">
    <property type="term" value="C:cytoplasm"/>
    <property type="evidence" value="ECO:0007669"/>
    <property type="project" value="UniProtKB-SubCell"/>
</dbReference>
<dbReference type="GO" id="GO:0005524">
    <property type="term" value="F:ATP binding"/>
    <property type="evidence" value="ECO:0007669"/>
    <property type="project" value="UniProtKB-KW"/>
</dbReference>
<dbReference type="GO" id="GO:0004636">
    <property type="term" value="F:phosphoribosyl-ATP diphosphatase activity"/>
    <property type="evidence" value="ECO:0007669"/>
    <property type="project" value="UniProtKB-UniRule"/>
</dbReference>
<dbReference type="GO" id="GO:0000105">
    <property type="term" value="P:L-histidine biosynthetic process"/>
    <property type="evidence" value="ECO:0007669"/>
    <property type="project" value="UniProtKB-UniRule"/>
</dbReference>
<dbReference type="CDD" id="cd11534">
    <property type="entry name" value="NTP-PPase_HisIE_like"/>
    <property type="match status" value="1"/>
</dbReference>
<dbReference type="Gene3D" id="1.10.287.1080">
    <property type="entry name" value="MazG-like"/>
    <property type="match status" value="1"/>
</dbReference>
<dbReference type="HAMAP" id="MF_01020">
    <property type="entry name" value="HisE"/>
    <property type="match status" value="1"/>
</dbReference>
<dbReference type="InterPro" id="IPR008179">
    <property type="entry name" value="HisE"/>
</dbReference>
<dbReference type="InterPro" id="IPR021130">
    <property type="entry name" value="PRib-ATP_PPHydrolase-like"/>
</dbReference>
<dbReference type="NCBIfam" id="TIGR03188">
    <property type="entry name" value="histidine_hisI"/>
    <property type="match status" value="1"/>
</dbReference>
<dbReference type="NCBIfam" id="NF001611">
    <property type="entry name" value="PRK00400.1-3"/>
    <property type="match status" value="1"/>
</dbReference>
<dbReference type="PANTHER" id="PTHR42945">
    <property type="entry name" value="HISTIDINE BIOSYNTHESIS BIFUNCTIONAL PROTEIN"/>
    <property type="match status" value="1"/>
</dbReference>
<dbReference type="PANTHER" id="PTHR42945:SF9">
    <property type="entry name" value="HISTIDINE BIOSYNTHESIS BIFUNCTIONAL PROTEIN HISIE"/>
    <property type="match status" value="1"/>
</dbReference>
<dbReference type="Pfam" id="PF01503">
    <property type="entry name" value="PRA-PH"/>
    <property type="match status" value="1"/>
</dbReference>
<dbReference type="SUPFAM" id="SSF101386">
    <property type="entry name" value="all-alpha NTP pyrophosphatases"/>
    <property type="match status" value="1"/>
</dbReference>
<name>HIS2_VESOH</name>
<feature type="chain" id="PRO_1000190392" description="Phosphoribosyl-ATP pyrophosphatase">
    <location>
        <begin position="1"/>
        <end position="105"/>
    </location>
</feature>
<comment type="catalytic activity">
    <reaction evidence="1">
        <text>1-(5-phospho-beta-D-ribosyl)-ATP + H2O = 1-(5-phospho-beta-D-ribosyl)-5'-AMP + diphosphate + H(+)</text>
        <dbReference type="Rhea" id="RHEA:22828"/>
        <dbReference type="ChEBI" id="CHEBI:15377"/>
        <dbReference type="ChEBI" id="CHEBI:15378"/>
        <dbReference type="ChEBI" id="CHEBI:33019"/>
        <dbReference type="ChEBI" id="CHEBI:59457"/>
        <dbReference type="ChEBI" id="CHEBI:73183"/>
        <dbReference type="EC" id="3.6.1.31"/>
    </reaction>
</comment>
<comment type="pathway">
    <text evidence="1">Amino-acid biosynthesis; L-histidine biosynthesis; L-histidine from 5-phospho-alpha-D-ribose 1-diphosphate: step 2/9.</text>
</comment>
<comment type="subcellular location">
    <subcellularLocation>
        <location evidence="1">Cytoplasm</location>
    </subcellularLocation>
</comment>
<comment type="similarity">
    <text evidence="1">Belongs to the PRA-PH family.</text>
</comment>
<reference key="1">
    <citation type="journal article" date="2007" name="Curr. Biol.">
        <title>Reduced genome of the thioautotrophic intracellular symbiont in a deep-sea clam, Calyptogena okutanii.</title>
        <authorList>
            <person name="Kuwahara H."/>
            <person name="Yoshida T."/>
            <person name="Takaki Y."/>
            <person name="Shimamura S."/>
            <person name="Nishi S."/>
            <person name="Harada M."/>
            <person name="Matsuyama K."/>
            <person name="Takishita K."/>
            <person name="Kawato M."/>
            <person name="Uematsu K."/>
            <person name="Fujiwara Y."/>
            <person name="Sato T."/>
            <person name="Kato C."/>
            <person name="Kitagawa M."/>
            <person name="Kato I."/>
            <person name="Maruyama T."/>
        </authorList>
    </citation>
    <scope>NUCLEOTIDE SEQUENCE [LARGE SCALE GENOMIC DNA]</scope>
    <source>
        <strain>HA</strain>
    </source>
</reference>
<protein>
    <recommendedName>
        <fullName evidence="1">Phosphoribosyl-ATP pyrophosphatase</fullName>
        <shortName evidence="1">PRA-PH</shortName>
        <ecNumber evidence="1">3.6.1.31</ecNumber>
    </recommendedName>
</protein>
<accession>A5CXC6</accession>
<proteinExistence type="inferred from homology"/>
<sequence length="105" mass="12132">MDEILIKLEQILEQRKSAKADKSYVSSLYNKGTDEILKKISEESAEVIMATKDGSNDKIIYEIADLWFHTLVLLRFKKIKVEQITNELSRRFGLSGLKEKANRNN</sequence>
<keyword id="KW-0028">Amino-acid biosynthesis</keyword>
<keyword id="KW-0067">ATP-binding</keyword>
<keyword id="KW-0963">Cytoplasm</keyword>
<keyword id="KW-0368">Histidine biosynthesis</keyword>
<keyword id="KW-0378">Hydrolase</keyword>
<keyword id="KW-0547">Nucleotide-binding</keyword>
<keyword id="KW-1185">Reference proteome</keyword>
<organism>
    <name type="scientific">Vesicomyosocius okutanii subsp. Calyptogena okutanii (strain HA)</name>
    <dbReference type="NCBI Taxonomy" id="412965"/>
    <lineage>
        <taxon>Bacteria</taxon>
        <taxon>Pseudomonadati</taxon>
        <taxon>Pseudomonadota</taxon>
        <taxon>Gammaproteobacteria</taxon>
        <taxon>Candidatus Pseudothioglobaceae</taxon>
        <taxon>Candidatus Vesicomyosocius</taxon>
    </lineage>
</organism>
<gene>
    <name evidence="1" type="primary">hisE</name>
    <name type="ordered locus">COSY_0274</name>
</gene>